<name>FADA_PSEAE</name>
<evidence type="ECO:0000255" key="1">
    <source>
        <dbReference type="HAMAP-Rule" id="MF_01620"/>
    </source>
</evidence>
<sequence>MSLNPRDVVIVDFGRTPMGRSKGGMHRNTRAETMSAHLISKLLERNPKVDPAEVEDVIWGCVNQTLEQGWNIARMASLMTQIPHTSAAQTVSRLCGSSMSALHTAAQAIQTGNGDVFVIGGVEHMGHVGMMHGVDPNPHLSLYAAKASGMMGLTAEMLGKMHGISREAQDKFGARSHQLAWKATQEGKFKDEIIPMEGYDENGFLKVFDFDETIRPETTVETLAELKPAFNPKGGTVTAGTSSQITDGASCMIVMSAQRAQDLGIQPMAVIRSMAVAGVDPAIMGYGPVPSTNKALKRAGLTIADIDFVELNEAFAAQALPVLKDLKLLDKMDEKVNLHGGAIALGHPFGCSGARISGTLLNVMKQNGGTLGVSTMCVGLGQGITTVFERI</sequence>
<dbReference type="EC" id="2.3.1.16" evidence="1"/>
<dbReference type="EMBL" id="AE004091">
    <property type="protein sequence ID" value="AAG06401.1"/>
    <property type="molecule type" value="Genomic_DNA"/>
</dbReference>
<dbReference type="PIR" id="F83269">
    <property type="entry name" value="F83269"/>
</dbReference>
<dbReference type="RefSeq" id="WP_003113978.1">
    <property type="nucleotide sequence ID" value="NZ_QZGE01000009.1"/>
</dbReference>
<dbReference type="SMR" id="Q9HZJ3"/>
<dbReference type="FunCoup" id="Q9HZJ3">
    <property type="interactions" value="132"/>
</dbReference>
<dbReference type="STRING" id="208964.PA3013"/>
<dbReference type="PaxDb" id="208964-PA3013"/>
<dbReference type="KEGG" id="pae:PA3013"/>
<dbReference type="PATRIC" id="fig|208964.12.peg.3161"/>
<dbReference type="PseudoCAP" id="PA3013"/>
<dbReference type="HOGENOM" id="CLU_031026_2_3_6"/>
<dbReference type="InParanoid" id="Q9HZJ3"/>
<dbReference type="OrthoDB" id="8951704at2"/>
<dbReference type="PhylomeDB" id="Q9HZJ3"/>
<dbReference type="BioCyc" id="MetaCyc:MONOMER-17590"/>
<dbReference type="BioCyc" id="PAER208964:G1FZ6-3065-MONOMER"/>
<dbReference type="UniPathway" id="UPA00659"/>
<dbReference type="Proteomes" id="UP000002438">
    <property type="component" value="Chromosome"/>
</dbReference>
<dbReference type="GO" id="GO:0005737">
    <property type="term" value="C:cytoplasm"/>
    <property type="evidence" value="ECO:0007669"/>
    <property type="project" value="UniProtKB-SubCell"/>
</dbReference>
<dbReference type="GO" id="GO:0003988">
    <property type="term" value="F:acetyl-CoA C-acyltransferase activity"/>
    <property type="evidence" value="ECO:0000318"/>
    <property type="project" value="GO_Central"/>
</dbReference>
<dbReference type="GO" id="GO:0006635">
    <property type="term" value="P:fatty acid beta-oxidation"/>
    <property type="evidence" value="ECO:0000318"/>
    <property type="project" value="GO_Central"/>
</dbReference>
<dbReference type="GO" id="GO:0010124">
    <property type="term" value="P:phenylacetate catabolic process"/>
    <property type="evidence" value="ECO:0000318"/>
    <property type="project" value="GO_Central"/>
</dbReference>
<dbReference type="CDD" id="cd00751">
    <property type="entry name" value="thiolase"/>
    <property type="match status" value="1"/>
</dbReference>
<dbReference type="FunFam" id="3.40.47.10:FF:000010">
    <property type="entry name" value="Acetyl-CoA acetyltransferase (Thiolase)"/>
    <property type="match status" value="1"/>
</dbReference>
<dbReference type="Gene3D" id="3.40.47.10">
    <property type="match status" value="2"/>
</dbReference>
<dbReference type="HAMAP" id="MF_01620">
    <property type="entry name" value="FadA"/>
    <property type="match status" value="1"/>
</dbReference>
<dbReference type="InterPro" id="IPR012805">
    <property type="entry name" value="FadA"/>
</dbReference>
<dbReference type="InterPro" id="IPR002155">
    <property type="entry name" value="Thiolase"/>
</dbReference>
<dbReference type="InterPro" id="IPR016039">
    <property type="entry name" value="Thiolase-like"/>
</dbReference>
<dbReference type="InterPro" id="IPR050215">
    <property type="entry name" value="Thiolase-like_sf_Thiolase"/>
</dbReference>
<dbReference type="InterPro" id="IPR020615">
    <property type="entry name" value="Thiolase_acyl_enz_int_AS"/>
</dbReference>
<dbReference type="InterPro" id="IPR020617">
    <property type="entry name" value="Thiolase_C"/>
</dbReference>
<dbReference type="InterPro" id="IPR020613">
    <property type="entry name" value="Thiolase_CS"/>
</dbReference>
<dbReference type="InterPro" id="IPR020616">
    <property type="entry name" value="Thiolase_N"/>
</dbReference>
<dbReference type="NCBIfam" id="TIGR01930">
    <property type="entry name" value="AcCoA-C-Actrans"/>
    <property type="match status" value="1"/>
</dbReference>
<dbReference type="NCBIfam" id="TIGR02445">
    <property type="entry name" value="fadA"/>
    <property type="match status" value="1"/>
</dbReference>
<dbReference type="NCBIfam" id="NF006510">
    <property type="entry name" value="PRK08947.1"/>
    <property type="match status" value="1"/>
</dbReference>
<dbReference type="PANTHER" id="PTHR43853:SF11">
    <property type="entry name" value="3-KETOACYL-COA THIOLASE FADA"/>
    <property type="match status" value="1"/>
</dbReference>
<dbReference type="PANTHER" id="PTHR43853">
    <property type="entry name" value="3-KETOACYL-COA THIOLASE, PEROXISOMAL"/>
    <property type="match status" value="1"/>
</dbReference>
<dbReference type="Pfam" id="PF02803">
    <property type="entry name" value="Thiolase_C"/>
    <property type="match status" value="1"/>
</dbReference>
<dbReference type="Pfam" id="PF00108">
    <property type="entry name" value="Thiolase_N"/>
    <property type="match status" value="1"/>
</dbReference>
<dbReference type="PIRSF" id="PIRSF000429">
    <property type="entry name" value="Ac-CoA_Ac_transf"/>
    <property type="match status" value="1"/>
</dbReference>
<dbReference type="SUPFAM" id="SSF53901">
    <property type="entry name" value="Thiolase-like"/>
    <property type="match status" value="2"/>
</dbReference>
<dbReference type="PROSITE" id="PS00098">
    <property type="entry name" value="THIOLASE_1"/>
    <property type="match status" value="1"/>
</dbReference>
<dbReference type="PROSITE" id="PS00737">
    <property type="entry name" value="THIOLASE_2"/>
    <property type="match status" value="1"/>
</dbReference>
<gene>
    <name evidence="1" type="primary">fadA</name>
    <name type="ordered locus">PA3013</name>
</gene>
<protein>
    <recommendedName>
        <fullName evidence="1">3-ketoacyl-CoA thiolase</fullName>
        <ecNumber evidence="1">2.3.1.16</ecNumber>
    </recommendedName>
    <alternativeName>
        <fullName evidence="1">Acetyl-CoA acyltransferase</fullName>
    </alternativeName>
    <alternativeName>
        <fullName evidence="1">Beta-ketothiolase</fullName>
    </alternativeName>
    <alternativeName>
        <fullName evidence="1">Fatty acid oxidation complex subunit beta</fullName>
    </alternativeName>
</protein>
<reference key="1">
    <citation type="journal article" date="2000" name="Nature">
        <title>Complete genome sequence of Pseudomonas aeruginosa PAO1, an opportunistic pathogen.</title>
        <authorList>
            <person name="Stover C.K."/>
            <person name="Pham X.-Q.T."/>
            <person name="Erwin A.L."/>
            <person name="Mizoguchi S.D."/>
            <person name="Warrener P."/>
            <person name="Hickey M.J."/>
            <person name="Brinkman F.S.L."/>
            <person name="Hufnagle W.O."/>
            <person name="Kowalik D.J."/>
            <person name="Lagrou M."/>
            <person name="Garber R.L."/>
            <person name="Goltry L."/>
            <person name="Tolentino E."/>
            <person name="Westbrock-Wadman S."/>
            <person name="Yuan Y."/>
            <person name="Brody L.L."/>
            <person name="Coulter S.N."/>
            <person name="Folger K.R."/>
            <person name="Kas A."/>
            <person name="Larbig K."/>
            <person name="Lim R.M."/>
            <person name="Smith K.A."/>
            <person name="Spencer D.H."/>
            <person name="Wong G.K.-S."/>
            <person name="Wu Z."/>
            <person name="Paulsen I.T."/>
            <person name="Reizer J."/>
            <person name="Saier M.H. Jr."/>
            <person name="Hancock R.E.W."/>
            <person name="Lory S."/>
            <person name="Olson M.V."/>
        </authorList>
    </citation>
    <scope>NUCLEOTIDE SEQUENCE [LARGE SCALE GENOMIC DNA]</scope>
    <source>
        <strain>ATCC 15692 / DSM 22644 / CIP 104116 / JCM 14847 / LMG 12228 / 1C / PRS 101 / PAO1</strain>
    </source>
</reference>
<accession>Q9HZJ3</accession>
<keyword id="KW-0012">Acyltransferase</keyword>
<keyword id="KW-0963">Cytoplasm</keyword>
<keyword id="KW-0276">Fatty acid metabolism</keyword>
<keyword id="KW-0442">Lipid degradation</keyword>
<keyword id="KW-0443">Lipid metabolism</keyword>
<keyword id="KW-1185">Reference proteome</keyword>
<keyword id="KW-0808">Transferase</keyword>
<feature type="chain" id="PRO_0000206378" description="3-ketoacyl-CoA thiolase">
    <location>
        <begin position="1"/>
        <end position="391"/>
    </location>
</feature>
<feature type="active site" description="Acyl-thioester intermediate" evidence="1">
    <location>
        <position position="95"/>
    </location>
</feature>
<feature type="active site" description="Proton acceptor" evidence="1">
    <location>
        <position position="347"/>
    </location>
</feature>
<feature type="active site" description="Proton acceptor" evidence="1">
    <location>
        <position position="377"/>
    </location>
</feature>
<comment type="function">
    <text evidence="1">Catalyzes the final step of fatty acid oxidation in which acetyl-CoA is released and the CoA ester of a fatty acid two carbons shorter is formed.</text>
</comment>
<comment type="catalytic activity">
    <reaction evidence="1">
        <text>an acyl-CoA + acetyl-CoA = a 3-oxoacyl-CoA + CoA</text>
        <dbReference type="Rhea" id="RHEA:21564"/>
        <dbReference type="ChEBI" id="CHEBI:57287"/>
        <dbReference type="ChEBI" id="CHEBI:57288"/>
        <dbReference type="ChEBI" id="CHEBI:58342"/>
        <dbReference type="ChEBI" id="CHEBI:90726"/>
        <dbReference type="EC" id="2.3.1.16"/>
    </reaction>
</comment>
<comment type="pathway">
    <text evidence="1">Lipid metabolism; fatty acid beta-oxidation.</text>
</comment>
<comment type="subunit">
    <text evidence="1">Heterotetramer of two alpha chains (FadB) and two beta chains (FadA).</text>
</comment>
<comment type="subcellular location">
    <subcellularLocation>
        <location evidence="1">Cytoplasm</location>
    </subcellularLocation>
</comment>
<comment type="similarity">
    <text evidence="1">Belongs to the thiolase-like superfamily. Thiolase family.</text>
</comment>
<organism>
    <name type="scientific">Pseudomonas aeruginosa (strain ATCC 15692 / DSM 22644 / CIP 104116 / JCM 14847 / LMG 12228 / 1C / PRS 101 / PAO1)</name>
    <dbReference type="NCBI Taxonomy" id="208964"/>
    <lineage>
        <taxon>Bacteria</taxon>
        <taxon>Pseudomonadati</taxon>
        <taxon>Pseudomonadota</taxon>
        <taxon>Gammaproteobacteria</taxon>
        <taxon>Pseudomonadales</taxon>
        <taxon>Pseudomonadaceae</taxon>
        <taxon>Pseudomonas</taxon>
    </lineage>
</organism>
<proteinExistence type="inferred from homology"/>